<protein>
    <recommendedName>
        <fullName evidence="2">Cytochrome b6-f complex subunit 4</fullName>
    </recommendedName>
    <alternativeName>
        <fullName evidence="2">17 kDa polypeptide</fullName>
    </alternativeName>
</protein>
<keyword id="KW-0150">Chloroplast</keyword>
<keyword id="KW-0249">Electron transport</keyword>
<keyword id="KW-0472">Membrane</keyword>
<keyword id="KW-0602">Photosynthesis</keyword>
<keyword id="KW-0934">Plastid</keyword>
<keyword id="KW-0793">Thylakoid</keyword>
<keyword id="KW-0812">Transmembrane</keyword>
<keyword id="KW-1133">Transmembrane helix</keyword>
<keyword id="KW-0813">Transport</keyword>
<dbReference type="EMBL" id="AP009123">
    <property type="protein sequence ID" value="BAF41278.1"/>
    <property type="molecule type" value="Genomic_DNA"/>
</dbReference>
<dbReference type="RefSeq" id="YP_913218.1">
    <property type="nucleotide sequence ID" value="NC_008641.1"/>
</dbReference>
<dbReference type="SMR" id="A0ZZ66"/>
<dbReference type="GeneID" id="4575207"/>
<dbReference type="GO" id="GO:0009535">
    <property type="term" value="C:chloroplast thylakoid membrane"/>
    <property type="evidence" value="ECO:0007669"/>
    <property type="project" value="UniProtKB-SubCell"/>
</dbReference>
<dbReference type="GO" id="GO:0045158">
    <property type="term" value="F:electron transporter, transferring electrons within cytochrome b6/f complex of photosystem II activity"/>
    <property type="evidence" value="ECO:0007669"/>
    <property type="project" value="UniProtKB-UniRule"/>
</dbReference>
<dbReference type="GO" id="GO:0045156">
    <property type="term" value="F:electron transporter, transferring electrons within the cyclic electron transport pathway of photosynthesis activity"/>
    <property type="evidence" value="ECO:0007669"/>
    <property type="project" value="InterPro"/>
</dbReference>
<dbReference type="GO" id="GO:0016491">
    <property type="term" value="F:oxidoreductase activity"/>
    <property type="evidence" value="ECO:0007669"/>
    <property type="project" value="InterPro"/>
</dbReference>
<dbReference type="GO" id="GO:0009767">
    <property type="term" value="P:photosynthetic electron transport chain"/>
    <property type="evidence" value="ECO:0007669"/>
    <property type="project" value="InterPro"/>
</dbReference>
<dbReference type="CDD" id="cd00290">
    <property type="entry name" value="cytochrome_b_C"/>
    <property type="match status" value="1"/>
</dbReference>
<dbReference type="FunFam" id="1.10.287.980:FF:000001">
    <property type="entry name" value="Cytochrome b6-f complex subunit 4"/>
    <property type="match status" value="1"/>
</dbReference>
<dbReference type="FunFam" id="1.20.5.510:FF:000002">
    <property type="entry name" value="Cytochrome b6-f complex subunit 4"/>
    <property type="match status" value="1"/>
</dbReference>
<dbReference type="Gene3D" id="1.10.287.980">
    <property type="entry name" value="plastocyanin oxidoreductase"/>
    <property type="match status" value="1"/>
</dbReference>
<dbReference type="Gene3D" id="1.20.5.510">
    <property type="entry name" value="Single helix bin"/>
    <property type="match status" value="1"/>
</dbReference>
<dbReference type="HAMAP" id="MF_01344">
    <property type="entry name" value="Cytb6_f_subIV"/>
    <property type="match status" value="1"/>
</dbReference>
<dbReference type="InterPro" id="IPR005798">
    <property type="entry name" value="Cyt_b/b6_C"/>
</dbReference>
<dbReference type="InterPro" id="IPR036150">
    <property type="entry name" value="Cyt_b/b6_C_sf"/>
</dbReference>
<dbReference type="InterPro" id="IPR005870">
    <property type="entry name" value="Cyt_b6/f_cplx_suIV"/>
</dbReference>
<dbReference type="InterPro" id="IPR048260">
    <property type="entry name" value="Cytochrome_b_C_euk/bac"/>
</dbReference>
<dbReference type="NCBIfam" id="TIGR01156">
    <property type="entry name" value="cytb6_f_IV"/>
    <property type="match status" value="1"/>
</dbReference>
<dbReference type="PANTHER" id="PTHR19271">
    <property type="entry name" value="CYTOCHROME B"/>
    <property type="match status" value="1"/>
</dbReference>
<dbReference type="PANTHER" id="PTHR19271:SF40">
    <property type="entry name" value="CYTOCHROME B"/>
    <property type="match status" value="1"/>
</dbReference>
<dbReference type="Pfam" id="PF00032">
    <property type="entry name" value="Cytochrom_B_C"/>
    <property type="match status" value="1"/>
</dbReference>
<dbReference type="PIRSF" id="PIRSF000033">
    <property type="entry name" value="B6f_17K"/>
    <property type="match status" value="1"/>
</dbReference>
<dbReference type="SUPFAM" id="SSF81648">
    <property type="entry name" value="a domain/subunit of cytochrome bc1 complex (Ubiquinol-cytochrome c reductase)"/>
    <property type="match status" value="1"/>
</dbReference>
<dbReference type="PROSITE" id="PS51003">
    <property type="entry name" value="CYTB_CTER"/>
    <property type="match status" value="1"/>
</dbReference>
<geneLocation type="chloroplast"/>
<evidence type="ECO:0000250" key="1"/>
<evidence type="ECO:0000255" key="2">
    <source>
        <dbReference type="HAMAP-Rule" id="MF_01344"/>
    </source>
</evidence>
<sequence length="160" mass="17493">MGVTKKPDLNDPVLRAKLAKGMGHNYYGEPAWPNDLLYIFPVVILGTIACNVGLAVLEPSMIGEPADPFATPLEILPEWYFFPVFQILRTVPNKLLGVFLMVSVPAGLLTVPFLENVNKFQNPFRRPVATTVFLIGTAVALWLGIGATLPIDKSLTLGLF</sequence>
<name>PETD_GOSBA</name>
<accession>A0ZZ66</accession>
<comment type="function">
    <text evidence="2">Component of the cytochrome b6-f complex, which mediates electron transfer between photosystem II (PSII) and photosystem I (PSI), cyclic electron flow around PSI, and state transitions.</text>
</comment>
<comment type="subunit">
    <text evidence="1">The 4 large subunits of the cytochrome b6-f complex are cytochrome b6, subunit IV (17 kDa polypeptide, petD), cytochrome f and the Rieske protein, while the 4 small subunits are petG, petL, petM and petN. The complex functions as a dimer (By similarity).</text>
</comment>
<comment type="subcellular location">
    <subcellularLocation>
        <location evidence="2">Plastid</location>
        <location evidence="2">Chloroplast thylakoid membrane</location>
        <topology evidence="2">Multi-pass membrane protein</topology>
    </subcellularLocation>
</comment>
<comment type="similarity">
    <text evidence="2">Belongs to the cytochrome b family. PetD subfamily.</text>
</comment>
<organism>
    <name type="scientific">Gossypium barbadense</name>
    <name type="common">Sea Island cotton</name>
    <name type="synonym">Hibiscus barbadensis</name>
    <dbReference type="NCBI Taxonomy" id="3634"/>
    <lineage>
        <taxon>Eukaryota</taxon>
        <taxon>Viridiplantae</taxon>
        <taxon>Streptophyta</taxon>
        <taxon>Embryophyta</taxon>
        <taxon>Tracheophyta</taxon>
        <taxon>Spermatophyta</taxon>
        <taxon>Magnoliopsida</taxon>
        <taxon>eudicotyledons</taxon>
        <taxon>Gunneridae</taxon>
        <taxon>Pentapetalae</taxon>
        <taxon>rosids</taxon>
        <taxon>malvids</taxon>
        <taxon>Malvales</taxon>
        <taxon>Malvaceae</taxon>
        <taxon>Malvoideae</taxon>
        <taxon>Gossypium</taxon>
    </lineage>
</organism>
<feature type="chain" id="PRO_0000276538" description="Cytochrome b6-f complex subunit 4">
    <location>
        <begin position="1"/>
        <end position="160"/>
    </location>
</feature>
<feature type="transmembrane region" description="Helical" evidence="2">
    <location>
        <begin position="36"/>
        <end position="56"/>
    </location>
</feature>
<feature type="transmembrane region" description="Helical" evidence="2">
    <location>
        <begin position="95"/>
        <end position="115"/>
    </location>
</feature>
<feature type="transmembrane region" description="Helical" evidence="2">
    <location>
        <begin position="131"/>
        <end position="151"/>
    </location>
</feature>
<proteinExistence type="inferred from homology"/>
<gene>
    <name evidence="2" type="primary">petD</name>
</gene>
<reference key="1">
    <citation type="journal article" date="2006" name="Genes Genet. Syst.">
        <title>Complete nucleotide sequence of the cotton (Gossypium barbadense L.) chloroplast genome with a comparative analysis of sequences among 9 dicot plants.</title>
        <authorList>
            <person name="Ibrahim R.I.H."/>
            <person name="Azuma J."/>
            <person name="Sakamoto M."/>
        </authorList>
    </citation>
    <scope>NUCLEOTIDE SEQUENCE [LARGE SCALE GENOMIC DNA]</scope>
</reference>